<reference key="1">
    <citation type="submission" date="2006-12" db="EMBL/GenBank/DDBJ databases">
        <title>Complete sequence of chromosome 1 of Acidovorax sp. JS42.</title>
        <authorList>
            <person name="Copeland A."/>
            <person name="Lucas S."/>
            <person name="Lapidus A."/>
            <person name="Barry K."/>
            <person name="Detter J.C."/>
            <person name="Glavina del Rio T."/>
            <person name="Dalin E."/>
            <person name="Tice H."/>
            <person name="Pitluck S."/>
            <person name="Chertkov O."/>
            <person name="Brettin T."/>
            <person name="Bruce D."/>
            <person name="Han C."/>
            <person name="Tapia R."/>
            <person name="Gilna P."/>
            <person name="Schmutz J."/>
            <person name="Larimer F."/>
            <person name="Land M."/>
            <person name="Hauser L."/>
            <person name="Kyrpides N."/>
            <person name="Kim E."/>
            <person name="Stahl D."/>
            <person name="Richardson P."/>
        </authorList>
    </citation>
    <scope>NUCLEOTIDE SEQUENCE [LARGE SCALE GENOMIC DNA]</scope>
    <source>
        <strain>JS42</strain>
    </source>
</reference>
<keyword id="KW-0963">Cytoplasm</keyword>
<keyword id="KW-0342">GTP-binding</keyword>
<keyword id="KW-0378">Hydrolase</keyword>
<keyword id="KW-0460">Magnesium</keyword>
<keyword id="KW-0479">Metal-binding</keyword>
<keyword id="KW-0547">Nucleotide-binding</keyword>
<comment type="function">
    <text evidence="1">An essential GTPase which binds GTP, GDP and possibly (p)ppGpp with moderate affinity, with high nucleotide exchange rates and a fairly low GTP hydrolysis rate. Plays a role in control of the cell cycle, stress response, ribosome biogenesis and in those bacteria that undergo differentiation, in morphogenesis control.</text>
</comment>
<comment type="cofactor">
    <cofactor evidence="1">
        <name>Mg(2+)</name>
        <dbReference type="ChEBI" id="CHEBI:18420"/>
    </cofactor>
</comment>
<comment type="subunit">
    <text evidence="1">Monomer.</text>
</comment>
<comment type="subcellular location">
    <subcellularLocation>
        <location evidence="1">Cytoplasm</location>
    </subcellularLocation>
</comment>
<comment type="similarity">
    <text evidence="1">Belongs to the TRAFAC class OBG-HflX-like GTPase superfamily. OBG GTPase family.</text>
</comment>
<comment type="sequence caution" evidence="3">
    <conflict type="erroneous initiation">
        <sequence resource="EMBL-CDS" id="ABM41085"/>
    </conflict>
    <text>Extended N-terminus.</text>
</comment>
<organism>
    <name type="scientific">Acidovorax sp. (strain JS42)</name>
    <dbReference type="NCBI Taxonomy" id="232721"/>
    <lineage>
        <taxon>Bacteria</taxon>
        <taxon>Pseudomonadati</taxon>
        <taxon>Pseudomonadota</taxon>
        <taxon>Betaproteobacteria</taxon>
        <taxon>Burkholderiales</taxon>
        <taxon>Comamonadaceae</taxon>
        <taxon>Acidovorax</taxon>
    </lineage>
</organism>
<name>OBG_ACISJ</name>
<protein>
    <recommendedName>
        <fullName evidence="1">GTPase Obg</fullName>
        <ecNumber evidence="1">3.6.5.-</ecNumber>
    </recommendedName>
    <alternativeName>
        <fullName evidence="1">GTP-binding protein Obg</fullName>
    </alternativeName>
</protein>
<sequence length="357" mass="38686">MKFVDEAFIDVAAGDGGNGCVSFRHEKYKEFGGPNGGDGGRGGHVFAVADPNLNTLVDFRYSRRHEAKRGEHGMGSDMFGAAGADITLKMPVGTIISDADTGELLYELLTPGEVVTIAKGGDGGFGNLRFKSAINRAPRQKTPGWPGERKSLKLELKVLADVGLLGMPNAGKSTFIAAVSNARPKIADYPFTTLHPNLGVVRVGPEQSFVVADIPGLIEGASEGAGLGHQFLRHLQRTRLLLHVVDMAPFDESVDPVAQAKAIVAELKKYDTQLYEKPRWLVLNKLDMVPAEERAARVKDFVKRFKWKGPVFEISALTREGCEPLVQSIFQHVHAQQLAQNAPAEVDPRFAGEPPRG</sequence>
<accession>A1W4B0</accession>
<gene>
    <name evidence="1" type="primary">obg</name>
    <name type="ordered locus">Ajs_0843</name>
</gene>
<proteinExistence type="inferred from homology"/>
<feature type="chain" id="PRO_0000385664" description="GTPase Obg">
    <location>
        <begin position="1"/>
        <end position="357"/>
    </location>
</feature>
<feature type="domain" description="Obg" evidence="2">
    <location>
        <begin position="1"/>
        <end position="159"/>
    </location>
</feature>
<feature type="domain" description="OBG-type G" evidence="1">
    <location>
        <begin position="160"/>
        <end position="334"/>
    </location>
</feature>
<feature type="binding site" evidence="1">
    <location>
        <begin position="166"/>
        <end position="173"/>
    </location>
    <ligand>
        <name>GTP</name>
        <dbReference type="ChEBI" id="CHEBI:37565"/>
    </ligand>
</feature>
<feature type="binding site" evidence="1">
    <location>
        <position position="173"/>
    </location>
    <ligand>
        <name>Mg(2+)</name>
        <dbReference type="ChEBI" id="CHEBI:18420"/>
    </ligand>
</feature>
<feature type="binding site" evidence="1">
    <location>
        <begin position="191"/>
        <end position="195"/>
    </location>
    <ligand>
        <name>GTP</name>
        <dbReference type="ChEBI" id="CHEBI:37565"/>
    </ligand>
</feature>
<feature type="binding site" evidence="1">
    <location>
        <position position="193"/>
    </location>
    <ligand>
        <name>Mg(2+)</name>
        <dbReference type="ChEBI" id="CHEBI:18420"/>
    </ligand>
</feature>
<feature type="binding site" evidence="1">
    <location>
        <begin position="213"/>
        <end position="216"/>
    </location>
    <ligand>
        <name>GTP</name>
        <dbReference type="ChEBI" id="CHEBI:37565"/>
    </ligand>
</feature>
<feature type="binding site" evidence="1">
    <location>
        <begin position="284"/>
        <end position="287"/>
    </location>
    <ligand>
        <name>GTP</name>
        <dbReference type="ChEBI" id="CHEBI:37565"/>
    </ligand>
</feature>
<feature type="binding site" evidence="1">
    <location>
        <begin position="315"/>
        <end position="317"/>
    </location>
    <ligand>
        <name>GTP</name>
        <dbReference type="ChEBI" id="CHEBI:37565"/>
    </ligand>
</feature>
<dbReference type="EC" id="3.6.5.-" evidence="1"/>
<dbReference type="EMBL" id="CP000539">
    <property type="protein sequence ID" value="ABM41085.1"/>
    <property type="status" value="ALT_INIT"/>
    <property type="molecule type" value="Genomic_DNA"/>
</dbReference>
<dbReference type="SMR" id="A1W4B0"/>
<dbReference type="STRING" id="232721.Ajs_0843"/>
<dbReference type="KEGG" id="ajs:Ajs_0843"/>
<dbReference type="eggNOG" id="COG0536">
    <property type="taxonomic scope" value="Bacteria"/>
</dbReference>
<dbReference type="HOGENOM" id="CLU_011747_2_0_4"/>
<dbReference type="Proteomes" id="UP000000645">
    <property type="component" value="Chromosome"/>
</dbReference>
<dbReference type="GO" id="GO:0005737">
    <property type="term" value="C:cytoplasm"/>
    <property type="evidence" value="ECO:0007669"/>
    <property type="project" value="UniProtKB-SubCell"/>
</dbReference>
<dbReference type="GO" id="GO:0005525">
    <property type="term" value="F:GTP binding"/>
    <property type="evidence" value="ECO:0007669"/>
    <property type="project" value="UniProtKB-UniRule"/>
</dbReference>
<dbReference type="GO" id="GO:0003924">
    <property type="term" value="F:GTPase activity"/>
    <property type="evidence" value="ECO:0007669"/>
    <property type="project" value="UniProtKB-UniRule"/>
</dbReference>
<dbReference type="GO" id="GO:0000287">
    <property type="term" value="F:magnesium ion binding"/>
    <property type="evidence" value="ECO:0007669"/>
    <property type="project" value="InterPro"/>
</dbReference>
<dbReference type="GO" id="GO:0042254">
    <property type="term" value="P:ribosome biogenesis"/>
    <property type="evidence" value="ECO:0007669"/>
    <property type="project" value="UniProtKB-UniRule"/>
</dbReference>
<dbReference type="CDD" id="cd01898">
    <property type="entry name" value="Obg"/>
    <property type="match status" value="1"/>
</dbReference>
<dbReference type="FunFam" id="2.70.210.12:FF:000001">
    <property type="entry name" value="GTPase Obg"/>
    <property type="match status" value="1"/>
</dbReference>
<dbReference type="Gene3D" id="2.70.210.12">
    <property type="entry name" value="GTP1/OBG domain"/>
    <property type="match status" value="1"/>
</dbReference>
<dbReference type="Gene3D" id="3.40.50.300">
    <property type="entry name" value="P-loop containing nucleotide triphosphate hydrolases"/>
    <property type="match status" value="1"/>
</dbReference>
<dbReference type="HAMAP" id="MF_01454">
    <property type="entry name" value="GTPase_Obg"/>
    <property type="match status" value="1"/>
</dbReference>
<dbReference type="InterPro" id="IPR031167">
    <property type="entry name" value="G_OBG"/>
</dbReference>
<dbReference type="InterPro" id="IPR006073">
    <property type="entry name" value="GTP-bd"/>
</dbReference>
<dbReference type="InterPro" id="IPR014100">
    <property type="entry name" value="GTP-bd_Obg/CgtA"/>
</dbReference>
<dbReference type="InterPro" id="IPR006074">
    <property type="entry name" value="GTP1-OBG_CS"/>
</dbReference>
<dbReference type="InterPro" id="IPR006169">
    <property type="entry name" value="GTP1_OBG_dom"/>
</dbReference>
<dbReference type="InterPro" id="IPR036726">
    <property type="entry name" value="GTP1_OBG_dom_sf"/>
</dbReference>
<dbReference type="InterPro" id="IPR045086">
    <property type="entry name" value="OBG_GTPase"/>
</dbReference>
<dbReference type="InterPro" id="IPR027417">
    <property type="entry name" value="P-loop_NTPase"/>
</dbReference>
<dbReference type="NCBIfam" id="TIGR02729">
    <property type="entry name" value="Obg_CgtA"/>
    <property type="match status" value="1"/>
</dbReference>
<dbReference type="NCBIfam" id="NF008954">
    <property type="entry name" value="PRK12296.1"/>
    <property type="match status" value="1"/>
</dbReference>
<dbReference type="NCBIfam" id="NF008955">
    <property type="entry name" value="PRK12297.1"/>
    <property type="match status" value="1"/>
</dbReference>
<dbReference type="NCBIfam" id="NF008956">
    <property type="entry name" value="PRK12299.1"/>
    <property type="match status" value="1"/>
</dbReference>
<dbReference type="PANTHER" id="PTHR11702">
    <property type="entry name" value="DEVELOPMENTALLY REGULATED GTP-BINDING PROTEIN-RELATED"/>
    <property type="match status" value="1"/>
</dbReference>
<dbReference type="PANTHER" id="PTHR11702:SF31">
    <property type="entry name" value="MITOCHONDRIAL RIBOSOME-ASSOCIATED GTPASE 2"/>
    <property type="match status" value="1"/>
</dbReference>
<dbReference type="Pfam" id="PF01018">
    <property type="entry name" value="GTP1_OBG"/>
    <property type="match status" value="1"/>
</dbReference>
<dbReference type="Pfam" id="PF01926">
    <property type="entry name" value="MMR_HSR1"/>
    <property type="match status" value="1"/>
</dbReference>
<dbReference type="PIRSF" id="PIRSF002401">
    <property type="entry name" value="GTP_bd_Obg/CgtA"/>
    <property type="match status" value="1"/>
</dbReference>
<dbReference type="PRINTS" id="PR00326">
    <property type="entry name" value="GTP1OBG"/>
</dbReference>
<dbReference type="SUPFAM" id="SSF82051">
    <property type="entry name" value="Obg GTP-binding protein N-terminal domain"/>
    <property type="match status" value="1"/>
</dbReference>
<dbReference type="SUPFAM" id="SSF52540">
    <property type="entry name" value="P-loop containing nucleoside triphosphate hydrolases"/>
    <property type="match status" value="1"/>
</dbReference>
<dbReference type="PROSITE" id="PS51710">
    <property type="entry name" value="G_OBG"/>
    <property type="match status" value="1"/>
</dbReference>
<dbReference type="PROSITE" id="PS00905">
    <property type="entry name" value="GTP1_OBG"/>
    <property type="match status" value="1"/>
</dbReference>
<dbReference type="PROSITE" id="PS51883">
    <property type="entry name" value="OBG"/>
    <property type="match status" value="1"/>
</dbReference>
<evidence type="ECO:0000255" key="1">
    <source>
        <dbReference type="HAMAP-Rule" id="MF_01454"/>
    </source>
</evidence>
<evidence type="ECO:0000255" key="2">
    <source>
        <dbReference type="PROSITE-ProRule" id="PRU01231"/>
    </source>
</evidence>
<evidence type="ECO:0000305" key="3"/>